<evidence type="ECO:0000255" key="1">
    <source>
        <dbReference type="HAMAP-Rule" id="MF_01200"/>
    </source>
</evidence>
<gene>
    <name evidence="1" type="primary">pyrF</name>
    <name type="ordered locus">BLi01775</name>
    <name type="ordered locus">BL02279</name>
</gene>
<name>PYRF_BACLD</name>
<sequence length="239" mass="26213">MNNTPPIIALDFASAQETYAFLDRFQGEELFVKVGMELFYQEGPAILENLQERGCRIFLDLKCHDIPTTVYKAMKRLAGFGVSLVNVHAAGGKQMMESALEGLEAGTPAGQKRPSLIAVTQLTSTSSEMLQRELLIETPLLDTVVHYSRLAEESGLDGVVCSVHEAEHIYRAVSVDFLTVTPGIRMADDKNNDQVRVATPGYAREKGVSAIVVGRSITQAEDPVSAYRRIGHEWEGTKA</sequence>
<dbReference type="EC" id="4.1.1.23" evidence="1"/>
<dbReference type="EMBL" id="AE017333">
    <property type="protein sequence ID" value="AAU40670.1"/>
    <property type="molecule type" value="Genomic_DNA"/>
</dbReference>
<dbReference type="EMBL" id="CP000002">
    <property type="protein sequence ID" value="AAU23310.1"/>
    <property type="molecule type" value="Genomic_DNA"/>
</dbReference>
<dbReference type="RefSeq" id="WP_003181630.1">
    <property type="nucleotide sequence ID" value="NC_006322.1"/>
</dbReference>
<dbReference type="SMR" id="Q65JU4"/>
<dbReference type="STRING" id="279010.BL02279"/>
<dbReference type="GeneID" id="92861632"/>
<dbReference type="KEGG" id="bld:BLi01775"/>
<dbReference type="KEGG" id="bli:BL02279"/>
<dbReference type="eggNOG" id="COG0284">
    <property type="taxonomic scope" value="Bacteria"/>
</dbReference>
<dbReference type="HOGENOM" id="CLU_067069_1_1_9"/>
<dbReference type="UniPathway" id="UPA00070">
    <property type="reaction ID" value="UER00120"/>
</dbReference>
<dbReference type="Proteomes" id="UP000000606">
    <property type="component" value="Chromosome"/>
</dbReference>
<dbReference type="GO" id="GO:0005829">
    <property type="term" value="C:cytosol"/>
    <property type="evidence" value="ECO:0007669"/>
    <property type="project" value="TreeGrafter"/>
</dbReference>
<dbReference type="GO" id="GO:0004590">
    <property type="term" value="F:orotidine-5'-phosphate decarboxylase activity"/>
    <property type="evidence" value="ECO:0007669"/>
    <property type="project" value="UniProtKB-UniRule"/>
</dbReference>
<dbReference type="GO" id="GO:0006207">
    <property type="term" value="P:'de novo' pyrimidine nucleobase biosynthetic process"/>
    <property type="evidence" value="ECO:0007669"/>
    <property type="project" value="InterPro"/>
</dbReference>
<dbReference type="GO" id="GO:0044205">
    <property type="term" value="P:'de novo' UMP biosynthetic process"/>
    <property type="evidence" value="ECO:0007669"/>
    <property type="project" value="UniProtKB-UniRule"/>
</dbReference>
<dbReference type="CDD" id="cd04725">
    <property type="entry name" value="OMP_decarboxylase_like"/>
    <property type="match status" value="1"/>
</dbReference>
<dbReference type="FunFam" id="3.20.20.70:FF:000015">
    <property type="entry name" value="Orotidine 5'-phosphate decarboxylase"/>
    <property type="match status" value="1"/>
</dbReference>
<dbReference type="Gene3D" id="3.20.20.70">
    <property type="entry name" value="Aldolase class I"/>
    <property type="match status" value="1"/>
</dbReference>
<dbReference type="HAMAP" id="MF_01200_B">
    <property type="entry name" value="OMPdecase_type1_B"/>
    <property type="match status" value="1"/>
</dbReference>
<dbReference type="InterPro" id="IPR013785">
    <property type="entry name" value="Aldolase_TIM"/>
</dbReference>
<dbReference type="InterPro" id="IPR014732">
    <property type="entry name" value="OMPdecase"/>
</dbReference>
<dbReference type="InterPro" id="IPR018089">
    <property type="entry name" value="OMPdecase_AS"/>
</dbReference>
<dbReference type="InterPro" id="IPR047596">
    <property type="entry name" value="OMPdecase_bac"/>
</dbReference>
<dbReference type="InterPro" id="IPR001754">
    <property type="entry name" value="OMPdeCOase_dom"/>
</dbReference>
<dbReference type="InterPro" id="IPR011060">
    <property type="entry name" value="RibuloseP-bd_barrel"/>
</dbReference>
<dbReference type="NCBIfam" id="NF001273">
    <property type="entry name" value="PRK00230.1"/>
    <property type="match status" value="1"/>
</dbReference>
<dbReference type="NCBIfam" id="TIGR01740">
    <property type="entry name" value="pyrF"/>
    <property type="match status" value="1"/>
</dbReference>
<dbReference type="PANTHER" id="PTHR32119">
    <property type="entry name" value="OROTIDINE 5'-PHOSPHATE DECARBOXYLASE"/>
    <property type="match status" value="1"/>
</dbReference>
<dbReference type="PANTHER" id="PTHR32119:SF2">
    <property type="entry name" value="OROTIDINE 5'-PHOSPHATE DECARBOXYLASE"/>
    <property type="match status" value="1"/>
</dbReference>
<dbReference type="Pfam" id="PF00215">
    <property type="entry name" value="OMPdecase"/>
    <property type="match status" value="1"/>
</dbReference>
<dbReference type="SMART" id="SM00934">
    <property type="entry name" value="OMPdecase"/>
    <property type="match status" value="1"/>
</dbReference>
<dbReference type="SUPFAM" id="SSF51366">
    <property type="entry name" value="Ribulose-phoshate binding barrel"/>
    <property type="match status" value="1"/>
</dbReference>
<dbReference type="PROSITE" id="PS00156">
    <property type="entry name" value="OMPDECASE"/>
    <property type="match status" value="1"/>
</dbReference>
<accession>Q65JU4</accession>
<accession>Q62V99</accession>
<comment type="function">
    <text evidence="1">Catalyzes the decarboxylation of orotidine 5'-monophosphate (OMP) to uridine 5'-monophosphate (UMP).</text>
</comment>
<comment type="catalytic activity">
    <reaction evidence="1">
        <text>orotidine 5'-phosphate + H(+) = UMP + CO2</text>
        <dbReference type="Rhea" id="RHEA:11596"/>
        <dbReference type="ChEBI" id="CHEBI:15378"/>
        <dbReference type="ChEBI" id="CHEBI:16526"/>
        <dbReference type="ChEBI" id="CHEBI:57538"/>
        <dbReference type="ChEBI" id="CHEBI:57865"/>
        <dbReference type="EC" id="4.1.1.23"/>
    </reaction>
</comment>
<comment type="pathway">
    <text evidence="1">Pyrimidine metabolism; UMP biosynthesis via de novo pathway; UMP from orotate: step 2/2.</text>
</comment>
<comment type="subunit">
    <text evidence="1">Homodimer.</text>
</comment>
<comment type="similarity">
    <text evidence="1">Belongs to the OMP decarboxylase family. Type 1 subfamily.</text>
</comment>
<feature type="chain" id="PRO_0000241847" description="Orotidine 5'-phosphate decarboxylase">
    <location>
        <begin position="1"/>
        <end position="239"/>
    </location>
</feature>
<feature type="active site" description="Proton donor" evidence="1">
    <location>
        <position position="62"/>
    </location>
</feature>
<feature type="binding site" evidence="1">
    <location>
        <position position="11"/>
    </location>
    <ligand>
        <name>substrate</name>
    </ligand>
</feature>
<feature type="binding site" evidence="1">
    <location>
        <position position="33"/>
    </location>
    <ligand>
        <name>substrate</name>
    </ligand>
</feature>
<feature type="binding site" evidence="1">
    <location>
        <begin position="60"/>
        <end position="69"/>
    </location>
    <ligand>
        <name>substrate</name>
    </ligand>
</feature>
<feature type="binding site" evidence="1">
    <location>
        <position position="123"/>
    </location>
    <ligand>
        <name>substrate</name>
    </ligand>
</feature>
<feature type="binding site" evidence="1">
    <location>
        <position position="185"/>
    </location>
    <ligand>
        <name>substrate</name>
    </ligand>
</feature>
<feature type="binding site" evidence="1">
    <location>
        <position position="194"/>
    </location>
    <ligand>
        <name>substrate</name>
    </ligand>
</feature>
<feature type="binding site" evidence="1">
    <location>
        <position position="214"/>
    </location>
    <ligand>
        <name>substrate</name>
    </ligand>
</feature>
<feature type="binding site" evidence="1">
    <location>
        <position position="215"/>
    </location>
    <ligand>
        <name>substrate</name>
    </ligand>
</feature>
<proteinExistence type="inferred from homology"/>
<keyword id="KW-0210">Decarboxylase</keyword>
<keyword id="KW-0456">Lyase</keyword>
<keyword id="KW-0665">Pyrimidine biosynthesis</keyword>
<keyword id="KW-1185">Reference proteome</keyword>
<organism>
    <name type="scientific">Bacillus licheniformis (strain ATCC 14580 / DSM 13 / JCM 2505 / CCUG 7422 / NBRC 12200 / NCIMB 9375 / NCTC 10341 / NRRL NRS-1264 / Gibson 46)</name>
    <dbReference type="NCBI Taxonomy" id="279010"/>
    <lineage>
        <taxon>Bacteria</taxon>
        <taxon>Bacillati</taxon>
        <taxon>Bacillota</taxon>
        <taxon>Bacilli</taxon>
        <taxon>Bacillales</taxon>
        <taxon>Bacillaceae</taxon>
        <taxon>Bacillus</taxon>
    </lineage>
</organism>
<reference key="1">
    <citation type="journal article" date="2004" name="J. Mol. Microbiol. Biotechnol.">
        <title>The complete genome sequence of Bacillus licheniformis DSM13, an organism with great industrial potential.</title>
        <authorList>
            <person name="Veith B."/>
            <person name="Herzberg C."/>
            <person name="Steckel S."/>
            <person name="Feesche J."/>
            <person name="Maurer K.H."/>
            <person name="Ehrenreich P."/>
            <person name="Baeumer S."/>
            <person name="Henne A."/>
            <person name="Liesegang H."/>
            <person name="Merkl R."/>
            <person name="Ehrenreich A."/>
            <person name="Gottschalk G."/>
        </authorList>
    </citation>
    <scope>NUCLEOTIDE SEQUENCE [LARGE SCALE GENOMIC DNA]</scope>
    <source>
        <strain>ATCC 14580 / DSM 13 / JCM 2505 / CCUG 7422 / NBRC 12200 / NCIMB 9375 / NCTC 10341 / NRRL NRS-1264 / Gibson 46</strain>
    </source>
</reference>
<reference key="2">
    <citation type="journal article" date="2004" name="Genome Biol.">
        <title>Complete genome sequence of the industrial bacterium Bacillus licheniformis and comparisons with closely related Bacillus species.</title>
        <authorList>
            <person name="Rey M.W."/>
            <person name="Ramaiya P."/>
            <person name="Nelson B.A."/>
            <person name="Brody-Karpin S.D."/>
            <person name="Zaretsky E.J."/>
            <person name="Tang M."/>
            <person name="Lopez de Leon A."/>
            <person name="Xiang H."/>
            <person name="Gusti V."/>
            <person name="Clausen I.G."/>
            <person name="Olsen P.B."/>
            <person name="Rasmussen M.D."/>
            <person name="Andersen J.T."/>
            <person name="Joergensen P.L."/>
            <person name="Larsen T.S."/>
            <person name="Sorokin A."/>
            <person name="Bolotin A."/>
            <person name="Lapidus A."/>
            <person name="Galleron N."/>
            <person name="Ehrlich S.D."/>
            <person name="Berka R.M."/>
        </authorList>
    </citation>
    <scope>NUCLEOTIDE SEQUENCE [LARGE SCALE GENOMIC DNA]</scope>
    <source>
        <strain>ATCC 14580 / DSM 13 / JCM 2505 / CCUG 7422 / NBRC 12200 / NCIMB 9375 / NCTC 10341 / NRRL NRS-1264 / Gibson 46</strain>
    </source>
</reference>
<protein>
    <recommendedName>
        <fullName evidence="1">Orotidine 5'-phosphate decarboxylase</fullName>
        <ecNumber evidence="1">4.1.1.23</ecNumber>
    </recommendedName>
    <alternativeName>
        <fullName evidence="1">OMP decarboxylase</fullName>
        <shortName evidence="1">OMPDCase</shortName>
        <shortName evidence="1">OMPdecase</shortName>
    </alternativeName>
</protein>